<sequence length="506" mass="57660">MRDPLTDCPYNKVYKNLKEFSQNGENFCKQVTSVLQQRANLEISYAKGLQKLASKLSKALQNTRKSCVSSAWAWASEGMKSTADLHQKLGKAIELEAIKPTYQVLNVQEKKRKSLDNEVEKTANLVISNWNQQIKAKKKLMVSTKKHEALFQLVESSKQSMTEKEKRKLLNKLTKSTEKLEKEDENYYQKNMAGYSTRLKWENTLENCYQSILELEKERIQLLCNNLNQYSQHISLFGQTLTTCHTQIHCAISKIDIEKDIQAVMEETAILSTENKSEFLLTDYFEEDPNSAMDKERRKSLLKPKLLRLQRDIEKASKDKEGLERMLKTYSSTSSFSDAKSQKDTAALMDENNLKLDLLEANSYKLSSMLAELEQRPQPSHPCSNSIFRWREKEHTHSYVKISRPFLMKRLENIVSKASSGGQSNPGSSTPAPGAAQLSSRLCKALYSFQARQDDELNLEKGDIVIIHEKKEGGWWFGSLNGKKGHFPAAYVEELPSNAGNTATKA</sequence>
<dbReference type="EMBL" id="AJ532842">
    <property type="protein sequence ID" value="CAD58724.1"/>
    <property type="molecule type" value="mRNA"/>
</dbReference>
<dbReference type="EMBL" id="DQ402497">
    <property type="protein sequence ID" value="ABD62889.1"/>
    <property type="molecule type" value="mRNA"/>
</dbReference>
<dbReference type="EMBL" id="AK002203">
    <property type="protein sequence ID" value="BAE46614.1"/>
    <property type="molecule type" value="mRNA"/>
</dbReference>
<dbReference type="EMBL" id="AK093444">
    <property type="protein sequence ID" value="BAG52717.1"/>
    <property type="molecule type" value="mRNA"/>
</dbReference>
<dbReference type="EMBL" id="AK290254">
    <property type="protein sequence ID" value="BAF82943.1"/>
    <property type="molecule type" value="mRNA"/>
</dbReference>
<dbReference type="EMBL" id="AC069137">
    <property type="protein sequence ID" value="AAY24097.1"/>
    <property type="molecule type" value="Genomic_DNA"/>
</dbReference>
<dbReference type="EMBL" id="AC009475">
    <property type="status" value="NOT_ANNOTATED_CDS"/>
    <property type="molecule type" value="Genomic_DNA"/>
</dbReference>
<dbReference type="EMBL" id="BC014189">
    <property type="protein sequence ID" value="AAH14189.1"/>
    <property type="molecule type" value="mRNA"/>
</dbReference>
<dbReference type="EMBL" id="BC093072">
    <property type="protein sequence ID" value="AAH93072.1"/>
    <property type="molecule type" value="mRNA"/>
</dbReference>
<dbReference type="EMBL" id="AL550371">
    <property type="status" value="NOT_ANNOTATED_CDS"/>
    <property type="molecule type" value="mRNA"/>
</dbReference>
<dbReference type="CCDS" id="CCDS42771.1">
    <molecule id="Q8IVI9-1"/>
</dbReference>
<dbReference type="CCDS" id="CCDS42772.1">
    <molecule id="Q8IVI9-3"/>
</dbReference>
<dbReference type="CCDS" id="CCDS54415.1">
    <molecule id="Q8IVI9-4"/>
</dbReference>
<dbReference type="CCDS" id="CCDS54416.1">
    <molecule id="Q8IVI9-2"/>
</dbReference>
<dbReference type="RefSeq" id="NP_001034813.2">
    <molecule id="Q8IVI9-1"/>
    <property type="nucleotide sequence ID" value="NM_001039724.4"/>
</dbReference>
<dbReference type="RefSeq" id="NP_001165102.1">
    <molecule id="Q8IVI9-4"/>
    <property type="nucleotide sequence ID" value="NM_001171631.2"/>
</dbReference>
<dbReference type="RefSeq" id="NP_001165103.1">
    <molecule id="Q8IVI9-2"/>
    <property type="nucleotide sequence ID" value="NM_001171632.2"/>
</dbReference>
<dbReference type="RefSeq" id="NP_443178.2">
    <molecule id="Q8IVI9-3"/>
    <property type="nucleotide sequence ID" value="NM_052946.4"/>
</dbReference>
<dbReference type="PDB" id="2YUN">
    <property type="method" value="NMR"/>
    <property type="chains" value="A=441-506"/>
</dbReference>
<dbReference type="PDBsum" id="2YUN"/>
<dbReference type="SMR" id="Q8IVI9"/>
<dbReference type="BioGRID" id="125446">
    <property type="interactions" value="13"/>
</dbReference>
<dbReference type="CORUM" id="Q8IVI9"/>
<dbReference type="FunCoup" id="Q8IVI9">
    <property type="interactions" value="43"/>
</dbReference>
<dbReference type="IntAct" id="Q8IVI9">
    <property type="interactions" value="22"/>
</dbReference>
<dbReference type="MINT" id="Q8IVI9"/>
<dbReference type="STRING" id="9606.ENSP00000394051"/>
<dbReference type="GlyGen" id="Q8IVI9">
    <property type="glycosylation" value="1 site"/>
</dbReference>
<dbReference type="iPTMnet" id="Q8IVI9"/>
<dbReference type="PhosphoSitePlus" id="Q8IVI9"/>
<dbReference type="BioMuta" id="NOSTRIN"/>
<dbReference type="DMDM" id="317373401"/>
<dbReference type="jPOST" id="Q8IVI9"/>
<dbReference type="MassIVE" id="Q8IVI9"/>
<dbReference type="PeptideAtlas" id="Q8IVI9"/>
<dbReference type="ProteomicsDB" id="17440"/>
<dbReference type="ProteomicsDB" id="70712">
    <molecule id="Q8IVI9-1"/>
</dbReference>
<dbReference type="ProteomicsDB" id="70713">
    <molecule id="Q8IVI9-2"/>
</dbReference>
<dbReference type="ProteomicsDB" id="70714">
    <molecule id="Q8IVI9-3"/>
</dbReference>
<dbReference type="Pumba" id="Q8IVI9"/>
<dbReference type="ABCD" id="Q8IVI9">
    <property type="antibodies" value="6 sequenced antibodies"/>
</dbReference>
<dbReference type="Antibodypedia" id="47609">
    <property type="antibodies" value="195 antibodies from 27 providers"/>
</dbReference>
<dbReference type="DNASU" id="115677"/>
<dbReference type="Ensembl" id="ENST00000317647.12">
    <molecule id="Q8IVI9-1"/>
    <property type="protein sequence ID" value="ENSP00000318921.7"/>
    <property type="gene ID" value="ENSG00000163072.16"/>
</dbReference>
<dbReference type="Ensembl" id="ENST00000397206.6">
    <molecule id="Q8IVI9-3"/>
    <property type="protein sequence ID" value="ENSP00000380390.2"/>
    <property type="gene ID" value="ENSG00000163072.16"/>
</dbReference>
<dbReference type="Ensembl" id="ENST00000397209.6">
    <molecule id="Q8IVI9-2"/>
    <property type="protein sequence ID" value="ENSP00000380392.2"/>
    <property type="gene ID" value="ENSG00000163072.16"/>
</dbReference>
<dbReference type="Ensembl" id="ENST00000444448.6">
    <molecule id="Q8IVI9-4"/>
    <property type="protein sequence ID" value="ENSP00000394051.2"/>
    <property type="gene ID" value="ENSG00000163072.16"/>
</dbReference>
<dbReference type="Ensembl" id="ENST00000445023.6">
    <molecule id="Q8IVI9-3"/>
    <property type="protein sequence ID" value="ENSP00000404413.2"/>
    <property type="gene ID" value="ENSG00000163072.16"/>
</dbReference>
<dbReference type="Ensembl" id="ENST00000458381.6">
    <molecule id="Q8IVI9-4"/>
    <property type="protein sequence ID" value="ENSP00000402140.2"/>
    <property type="gene ID" value="ENSG00000163072.16"/>
</dbReference>
<dbReference type="GeneID" id="115677"/>
<dbReference type="KEGG" id="hsa:115677"/>
<dbReference type="MANE-Select" id="ENST00000317647.12">
    <property type="protein sequence ID" value="ENSP00000318921.7"/>
    <property type="RefSeq nucleotide sequence ID" value="NM_001039724.4"/>
    <property type="RefSeq protein sequence ID" value="NP_001034813.2"/>
</dbReference>
<dbReference type="UCSC" id="uc002uef.4">
    <molecule id="Q8IVI9-1"/>
    <property type="organism name" value="human"/>
</dbReference>
<dbReference type="AGR" id="HGNC:20203"/>
<dbReference type="CTD" id="115677"/>
<dbReference type="DisGeNET" id="115677"/>
<dbReference type="GeneCards" id="NOSTRIN"/>
<dbReference type="HGNC" id="HGNC:20203">
    <property type="gene designation" value="NOSTRIN"/>
</dbReference>
<dbReference type="HPA" id="ENSG00000163072">
    <property type="expression patterns" value="Low tissue specificity"/>
</dbReference>
<dbReference type="MIM" id="607496">
    <property type="type" value="gene"/>
</dbReference>
<dbReference type="neXtProt" id="NX_Q8IVI9"/>
<dbReference type="OpenTargets" id="ENSG00000163072"/>
<dbReference type="PharmGKB" id="PA134992787"/>
<dbReference type="VEuPathDB" id="HostDB:ENSG00000163072"/>
<dbReference type="GeneTree" id="ENSGT00510000048120"/>
<dbReference type="HOGENOM" id="CLU_027170_1_0_1"/>
<dbReference type="InParanoid" id="Q8IVI9"/>
<dbReference type="OMA" id="HRLARFQ"/>
<dbReference type="OrthoDB" id="28357at2759"/>
<dbReference type="PAN-GO" id="Q8IVI9">
    <property type="GO annotations" value="4 GO annotations based on evolutionary models"/>
</dbReference>
<dbReference type="PhylomeDB" id="Q8IVI9"/>
<dbReference type="PathwayCommons" id="Q8IVI9"/>
<dbReference type="Reactome" id="R-HSA-203641">
    <property type="pathway name" value="NOSTRIN mediated eNOS trafficking"/>
</dbReference>
<dbReference type="SignaLink" id="Q8IVI9"/>
<dbReference type="BioGRID-ORCS" id="115677">
    <property type="hits" value="10 hits in 1157 CRISPR screens"/>
</dbReference>
<dbReference type="ChiTaRS" id="NOSTRIN">
    <property type="organism name" value="human"/>
</dbReference>
<dbReference type="EvolutionaryTrace" id="Q8IVI9"/>
<dbReference type="GenomeRNAi" id="115677"/>
<dbReference type="Pharos" id="Q8IVI9">
    <property type="development level" value="Tbio"/>
</dbReference>
<dbReference type="PRO" id="PR:Q8IVI9"/>
<dbReference type="Proteomes" id="UP000005640">
    <property type="component" value="Chromosome 2"/>
</dbReference>
<dbReference type="RNAct" id="Q8IVI9">
    <property type="molecule type" value="protein"/>
</dbReference>
<dbReference type="Bgee" id="ENSG00000163072">
    <property type="expression patterns" value="Expressed in right lung and 97 other cell types or tissues"/>
</dbReference>
<dbReference type="ExpressionAtlas" id="Q8IVI9">
    <property type="expression patterns" value="baseline and differential"/>
</dbReference>
<dbReference type="GO" id="GO:0005856">
    <property type="term" value="C:cytoskeleton"/>
    <property type="evidence" value="ECO:0007669"/>
    <property type="project" value="UniProtKB-SubCell"/>
</dbReference>
<dbReference type="GO" id="GO:0030666">
    <property type="term" value="C:endocytic vesicle membrane"/>
    <property type="evidence" value="ECO:0000304"/>
    <property type="project" value="Reactome"/>
</dbReference>
<dbReference type="GO" id="GO:0005634">
    <property type="term" value="C:nucleus"/>
    <property type="evidence" value="ECO:0007669"/>
    <property type="project" value="UniProtKB-SubCell"/>
</dbReference>
<dbReference type="GO" id="GO:0005886">
    <property type="term" value="C:plasma membrane"/>
    <property type="evidence" value="ECO:0000304"/>
    <property type="project" value="Reactome"/>
</dbReference>
<dbReference type="GO" id="GO:0003677">
    <property type="term" value="F:DNA binding"/>
    <property type="evidence" value="ECO:0007669"/>
    <property type="project" value="Ensembl"/>
</dbReference>
<dbReference type="GO" id="GO:0006897">
    <property type="term" value="P:endocytosis"/>
    <property type="evidence" value="ECO:0007669"/>
    <property type="project" value="UniProtKB-KW"/>
</dbReference>
<dbReference type="GO" id="GO:0045892">
    <property type="term" value="P:negative regulation of DNA-templated transcription"/>
    <property type="evidence" value="ECO:0007669"/>
    <property type="project" value="Ensembl"/>
</dbReference>
<dbReference type="GO" id="GO:0007165">
    <property type="term" value="P:signal transduction"/>
    <property type="evidence" value="ECO:0007669"/>
    <property type="project" value="InterPro"/>
</dbReference>
<dbReference type="CDD" id="cd11823">
    <property type="entry name" value="SH3_Nostrin"/>
    <property type="match status" value="1"/>
</dbReference>
<dbReference type="FunFam" id="2.30.30.40:FF:000186">
    <property type="entry name" value="Nitric oxide synthase trafficking"/>
    <property type="match status" value="1"/>
</dbReference>
<dbReference type="FunFam" id="1.20.1270.60:FF:000067">
    <property type="entry name" value="NOSTRIN isoform 1"/>
    <property type="match status" value="1"/>
</dbReference>
<dbReference type="Gene3D" id="6.10.140.470">
    <property type="match status" value="1"/>
</dbReference>
<dbReference type="Gene3D" id="1.20.1270.60">
    <property type="entry name" value="Arfaptin homology (AH) domain/BAR domain"/>
    <property type="match status" value="1"/>
</dbReference>
<dbReference type="Gene3D" id="2.30.30.40">
    <property type="entry name" value="SH3 Domains"/>
    <property type="match status" value="1"/>
</dbReference>
<dbReference type="InterPro" id="IPR027267">
    <property type="entry name" value="AH/BAR_dom_sf"/>
</dbReference>
<dbReference type="InterPro" id="IPR031160">
    <property type="entry name" value="F_BAR"/>
</dbReference>
<dbReference type="InterPro" id="IPR001060">
    <property type="entry name" value="FCH_dom"/>
</dbReference>
<dbReference type="InterPro" id="IPR011072">
    <property type="entry name" value="HR1_rho-bd"/>
</dbReference>
<dbReference type="InterPro" id="IPR036274">
    <property type="entry name" value="HR1_rpt_sf"/>
</dbReference>
<dbReference type="InterPro" id="IPR035656">
    <property type="entry name" value="Nostrin_SH3"/>
</dbReference>
<dbReference type="InterPro" id="IPR036028">
    <property type="entry name" value="SH3-like_dom_sf"/>
</dbReference>
<dbReference type="InterPro" id="IPR001452">
    <property type="entry name" value="SH3_domain"/>
</dbReference>
<dbReference type="PANTHER" id="PTHR23065:SF7">
    <property type="entry name" value="NOSTRIN, ISOFORM H"/>
    <property type="match status" value="1"/>
</dbReference>
<dbReference type="PANTHER" id="PTHR23065">
    <property type="entry name" value="PROLINE-SERINE-THREONINE PHOSPHATASE INTERACTING PROTEIN 1"/>
    <property type="match status" value="1"/>
</dbReference>
<dbReference type="Pfam" id="PF00611">
    <property type="entry name" value="FCH"/>
    <property type="match status" value="1"/>
</dbReference>
<dbReference type="Pfam" id="PF14604">
    <property type="entry name" value="SH3_9"/>
    <property type="match status" value="1"/>
</dbReference>
<dbReference type="PRINTS" id="PR00452">
    <property type="entry name" value="SH3DOMAIN"/>
</dbReference>
<dbReference type="SMART" id="SM00326">
    <property type="entry name" value="SH3"/>
    <property type="match status" value="1"/>
</dbReference>
<dbReference type="SUPFAM" id="SSF103657">
    <property type="entry name" value="BAR/IMD domain-like"/>
    <property type="match status" value="1"/>
</dbReference>
<dbReference type="SUPFAM" id="SSF46585">
    <property type="entry name" value="HR1 repeat"/>
    <property type="match status" value="1"/>
</dbReference>
<dbReference type="SUPFAM" id="SSF50044">
    <property type="entry name" value="SH3-domain"/>
    <property type="match status" value="1"/>
</dbReference>
<dbReference type="PROSITE" id="PS51741">
    <property type="entry name" value="F_BAR"/>
    <property type="match status" value="1"/>
</dbReference>
<dbReference type="PROSITE" id="PS51860">
    <property type="entry name" value="REM_1"/>
    <property type="match status" value="1"/>
</dbReference>
<dbReference type="PROSITE" id="PS50002">
    <property type="entry name" value="SH3"/>
    <property type="match status" value="1"/>
</dbReference>
<protein>
    <recommendedName>
        <fullName evidence="20">Nostrin</fullName>
    </recommendedName>
    <alternativeName>
        <fullName>BM247 homolog</fullName>
    </alternativeName>
    <alternativeName>
        <fullName>Nitric oxide synthase traffic inducer</fullName>
    </alternativeName>
    <alternativeName>
        <fullName>Nitric oxide synthase trafficker</fullName>
    </alternativeName>
    <alternativeName>
        <fullName>eNOS-trafficking inducer</fullName>
    </alternativeName>
</protein>
<accession>Q8IVI9</accession>
<accession>A8K2I9</accession>
<accession>B3KSF5</accession>
<accession>E7EPT9</accession>
<accession>Q27HG3</accession>
<accession>Q53S62</accession>
<accession>Q96CJ9</accession>
<organism>
    <name type="scientific">Homo sapiens</name>
    <name type="common">Human</name>
    <dbReference type="NCBI Taxonomy" id="9606"/>
    <lineage>
        <taxon>Eukaryota</taxon>
        <taxon>Metazoa</taxon>
        <taxon>Chordata</taxon>
        <taxon>Craniata</taxon>
        <taxon>Vertebrata</taxon>
        <taxon>Euteleostomi</taxon>
        <taxon>Mammalia</taxon>
        <taxon>Eutheria</taxon>
        <taxon>Euarchontoglires</taxon>
        <taxon>Primates</taxon>
        <taxon>Haplorrhini</taxon>
        <taxon>Catarrhini</taxon>
        <taxon>Hominidae</taxon>
        <taxon>Homo</taxon>
    </lineage>
</organism>
<gene>
    <name evidence="21" type="primary">NOSTRIN</name>
</gene>
<reference key="1">
    <citation type="journal article" date="2002" name="Proc. Natl. Acad. Sci. U.S.A.">
        <title>NOSTRIN: a protein modulating nitric oxide release and subcellular distribution of endothelial nitric oxide synthase.</title>
        <authorList>
            <person name="Zimmermann K."/>
            <person name="Opitz N."/>
            <person name="Dedio J."/>
            <person name="Renne C."/>
            <person name="Mueller-Esterl W."/>
            <person name="Oess S."/>
        </authorList>
    </citation>
    <scope>NUCLEOTIDE SEQUENCE [MRNA] (ISOFORM 1)</scope>
    <scope>TISSUE SPECIFICITY</scope>
    <scope>INTERACTION WITH NOS3</scope>
    <scope>SUBCELLULAR LOCATION</scope>
    <scope>FUNCTION</scope>
    <scope>VARIANT GLU-473</scope>
    <source>
        <tissue>Placenta</tissue>
    </source>
</reference>
<reference key="2">
    <citation type="submission" date="2006-02" db="EMBL/GenBank/DDBJ databases">
        <title>Molecular characterization of an alternatively spliced variant of human NOSTRIN.</title>
        <authorList>
            <person name="Beese M."/>
            <person name="Kirsch T."/>
        </authorList>
    </citation>
    <scope>NUCLEOTIDE SEQUENCE [MRNA] (ISOFORM 2)</scope>
    <scope>VARIANT GLU-473</scope>
</reference>
<reference key="3">
    <citation type="journal article" date="2004" name="Nat. Genet.">
        <title>Complete sequencing and characterization of 21,243 full-length human cDNAs.</title>
        <authorList>
            <person name="Ota T."/>
            <person name="Suzuki Y."/>
            <person name="Nishikawa T."/>
            <person name="Otsuki T."/>
            <person name="Sugiyama T."/>
            <person name="Irie R."/>
            <person name="Wakamatsu A."/>
            <person name="Hayashi K."/>
            <person name="Sato H."/>
            <person name="Nagai K."/>
            <person name="Kimura K."/>
            <person name="Makita H."/>
            <person name="Sekine M."/>
            <person name="Obayashi M."/>
            <person name="Nishi T."/>
            <person name="Shibahara T."/>
            <person name="Tanaka T."/>
            <person name="Ishii S."/>
            <person name="Yamamoto J."/>
            <person name="Saito K."/>
            <person name="Kawai Y."/>
            <person name="Isono Y."/>
            <person name="Nakamura Y."/>
            <person name="Nagahari K."/>
            <person name="Murakami K."/>
            <person name="Yasuda T."/>
            <person name="Iwayanagi T."/>
            <person name="Wagatsuma M."/>
            <person name="Shiratori A."/>
            <person name="Sudo H."/>
            <person name="Hosoiri T."/>
            <person name="Kaku Y."/>
            <person name="Kodaira H."/>
            <person name="Kondo H."/>
            <person name="Sugawara M."/>
            <person name="Takahashi M."/>
            <person name="Kanda K."/>
            <person name="Yokoi T."/>
            <person name="Furuya T."/>
            <person name="Kikkawa E."/>
            <person name="Omura Y."/>
            <person name="Abe K."/>
            <person name="Kamihara K."/>
            <person name="Katsuta N."/>
            <person name="Sato K."/>
            <person name="Tanikawa M."/>
            <person name="Yamazaki M."/>
            <person name="Ninomiya K."/>
            <person name="Ishibashi T."/>
            <person name="Yamashita H."/>
            <person name="Murakawa K."/>
            <person name="Fujimori K."/>
            <person name="Tanai H."/>
            <person name="Kimata M."/>
            <person name="Watanabe M."/>
            <person name="Hiraoka S."/>
            <person name="Chiba Y."/>
            <person name="Ishida S."/>
            <person name="Ono Y."/>
            <person name="Takiguchi S."/>
            <person name="Watanabe S."/>
            <person name="Yosida M."/>
            <person name="Hotuta T."/>
            <person name="Kusano J."/>
            <person name="Kanehori K."/>
            <person name="Takahashi-Fujii A."/>
            <person name="Hara H."/>
            <person name="Tanase T.-O."/>
            <person name="Nomura Y."/>
            <person name="Togiya S."/>
            <person name="Komai F."/>
            <person name="Hara R."/>
            <person name="Takeuchi K."/>
            <person name="Arita M."/>
            <person name="Imose N."/>
            <person name="Musashino K."/>
            <person name="Yuuki H."/>
            <person name="Oshima A."/>
            <person name="Sasaki N."/>
            <person name="Aotsuka S."/>
            <person name="Yoshikawa Y."/>
            <person name="Matsunawa H."/>
            <person name="Ichihara T."/>
            <person name="Shiohata N."/>
            <person name="Sano S."/>
            <person name="Moriya S."/>
            <person name="Momiyama H."/>
            <person name="Satoh N."/>
            <person name="Takami S."/>
            <person name="Terashima Y."/>
            <person name="Suzuki O."/>
            <person name="Nakagawa S."/>
            <person name="Senoh A."/>
            <person name="Mizoguchi H."/>
            <person name="Goto Y."/>
            <person name="Shimizu F."/>
            <person name="Wakebe H."/>
            <person name="Hishigaki H."/>
            <person name="Watanabe T."/>
            <person name="Sugiyama A."/>
            <person name="Takemoto M."/>
            <person name="Kawakami B."/>
            <person name="Yamazaki M."/>
            <person name="Watanabe K."/>
            <person name="Kumagai A."/>
            <person name="Itakura S."/>
            <person name="Fukuzumi Y."/>
            <person name="Fujimori Y."/>
            <person name="Komiyama M."/>
            <person name="Tashiro H."/>
            <person name="Tanigami A."/>
            <person name="Fujiwara T."/>
            <person name="Ono T."/>
            <person name="Yamada K."/>
            <person name="Fujii Y."/>
            <person name="Ozaki K."/>
            <person name="Hirao M."/>
            <person name="Ohmori Y."/>
            <person name="Kawabata A."/>
            <person name="Hikiji T."/>
            <person name="Kobatake N."/>
            <person name="Inagaki H."/>
            <person name="Ikema Y."/>
            <person name="Okamoto S."/>
            <person name="Okitani R."/>
            <person name="Kawakami T."/>
            <person name="Noguchi S."/>
            <person name="Itoh T."/>
            <person name="Shigeta K."/>
            <person name="Senba T."/>
            <person name="Matsumura K."/>
            <person name="Nakajima Y."/>
            <person name="Mizuno T."/>
            <person name="Morinaga M."/>
            <person name="Sasaki M."/>
            <person name="Togashi T."/>
            <person name="Oyama M."/>
            <person name="Hata H."/>
            <person name="Watanabe M."/>
            <person name="Komatsu T."/>
            <person name="Mizushima-Sugano J."/>
            <person name="Satoh T."/>
            <person name="Shirai Y."/>
            <person name="Takahashi Y."/>
            <person name="Nakagawa K."/>
            <person name="Okumura K."/>
            <person name="Nagase T."/>
            <person name="Nomura N."/>
            <person name="Kikuchi H."/>
            <person name="Masuho Y."/>
            <person name="Yamashita R."/>
            <person name="Nakai K."/>
            <person name="Yada T."/>
            <person name="Nakamura Y."/>
            <person name="Ohara O."/>
            <person name="Isogai T."/>
            <person name="Sugano S."/>
        </authorList>
    </citation>
    <scope>NUCLEOTIDE SEQUENCE [LARGE SCALE MRNA] (ISOFORMS 1 AND 4)</scope>
    <scope>VARIANT GLU-473</scope>
    <source>
        <tissue>Colon</tissue>
        <tissue>Placenta</tissue>
        <tissue>Testis</tissue>
    </source>
</reference>
<reference key="4">
    <citation type="journal article" date="2005" name="Nature">
        <title>Generation and annotation of the DNA sequences of human chromosomes 2 and 4.</title>
        <authorList>
            <person name="Hillier L.W."/>
            <person name="Graves T.A."/>
            <person name="Fulton R.S."/>
            <person name="Fulton L.A."/>
            <person name="Pepin K.H."/>
            <person name="Minx P."/>
            <person name="Wagner-McPherson C."/>
            <person name="Layman D."/>
            <person name="Wylie K."/>
            <person name="Sekhon M."/>
            <person name="Becker M.C."/>
            <person name="Fewell G.A."/>
            <person name="Delehaunty K.D."/>
            <person name="Miner T.L."/>
            <person name="Nash W.E."/>
            <person name="Kremitzki C."/>
            <person name="Oddy L."/>
            <person name="Du H."/>
            <person name="Sun H."/>
            <person name="Bradshaw-Cordum H."/>
            <person name="Ali J."/>
            <person name="Carter J."/>
            <person name="Cordes M."/>
            <person name="Harris A."/>
            <person name="Isak A."/>
            <person name="van Brunt A."/>
            <person name="Nguyen C."/>
            <person name="Du F."/>
            <person name="Courtney L."/>
            <person name="Kalicki J."/>
            <person name="Ozersky P."/>
            <person name="Abbott S."/>
            <person name="Armstrong J."/>
            <person name="Belter E.A."/>
            <person name="Caruso L."/>
            <person name="Cedroni M."/>
            <person name="Cotton M."/>
            <person name="Davidson T."/>
            <person name="Desai A."/>
            <person name="Elliott G."/>
            <person name="Erb T."/>
            <person name="Fronick C."/>
            <person name="Gaige T."/>
            <person name="Haakenson W."/>
            <person name="Haglund K."/>
            <person name="Holmes A."/>
            <person name="Harkins R."/>
            <person name="Kim K."/>
            <person name="Kruchowski S.S."/>
            <person name="Strong C.M."/>
            <person name="Grewal N."/>
            <person name="Goyea E."/>
            <person name="Hou S."/>
            <person name="Levy A."/>
            <person name="Martinka S."/>
            <person name="Mead K."/>
            <person name="McLellan M.D."/>
            <person name="Meyer R."/>
            <person name="Randall-Maher J."/>
            <person name="Tomlinson C."/>
            <person name="Dauphin-Kohlberg S."/>
            <person name="Kozlowicz-Reilly A."/>
            <person name="Shah N."/>
            <person name="Swearengen-Shahid S."/>
            <person name="Snider J."/>
            <person name="Strong J.T."/>
            <person name="Thompson J."/>
            <person name="Yoakum M."/>
            <person name="Leonard S."/>
            <person name="Pearman C."/>
            <person name="Trani L."/>
            <person name="Radionenko M."/>
            <person name="Waligorski J.E."/>
            <person name="Wang C."/>
            <person name="Rock S.M."/>
            <person name="Tin-Wollam A.-M."/>
            <person name="Maupin R."/>
            <person name="Latreille P."/>
            <person name="Wendl M.C."/>
            <person name="Yang S.-P."/>
            <person name="Pohl C."/>
            <person name="Wallis J.W."/>
            <person name="Spieth J."/>
            <person name="Bieri T.A."/>
            <person name="Berkowicz N."/>
            <person name="Nelson J.O."/>
            <person name="Osborne J."/>
            <person name="Ding L."/>
            <person name="Meyer R."/>
            <person name="Sabo A."/>
            <person name="Shotland Y."/>
            <person name="Sinha P."/>
            <person name="Wohldmann P.E."/>
            <person name="Cook L.L."/>
            <person name="Hickenbotham M.T."/>
            <person name="Eldred J."/>
            <person name="Williams D."/>
            <person name="Jones T.A."/>
            <person name="She X."/>
            <person name="Ciccarelli F.D."/>
            <person name="Izaurralde E."/>
            <person name="Taylor J."/>
            <person name="Schmutz J."/>
            <person name="Myers R.M."/>
            <person name="Cox D.R."/>
            <person name="Huang X."/>
            <person name="McPherson J.D."/>
            <person name="Mardis E.R."/>
            <person name="Clifton S.W."/>
            <person name="Warren W.C."/>
            <person name="Chinwalla A.T."/>
            <person name="Eddy S.R."/>
            <person name="Marra M.A."/>
            <person name="Ovcharenko I."/>
            <person name="Furey T.S."/>
            <person name="Miller W."/>
            <person name="Eichler E.E."/>
            <person name="Bork P."/>
            <person name="Suyama M."/>
            <person name="Torrents D."/>
            <person name="Waterston R.H."/>
            <person name="Wilson R.K."/>
        </authorList>
    </citation>
    <scope>NUCLEOTIDE SEQUENCE [LARGE SCALE GENOMIC DNA]</scope>
</reference>
<reference key="5">
    <citation type="journal article" date="2004" name="Genome Res.">
        <title>The status, quality, and expansion of the NIH full-length cDNA project: the Mammalian Gene Collection (MGC).</title>
        <authorList>
            <consortium name="The MGC Project Team"/>
        </authorList>
    </citation>
    <scope>NUCLEOTIDE SEQUENCE [LARGE SCALE MRNA] (ISOFORMS 1 AND 3)</scope>
    <scope>VARIANT GLU-473</scope>
    <source>
        <tissue>Placenta</tissue>
        <tissue>Thyroid</tissue>
    </source>
</reference>
<reference key="6">
    <citation type="submission" date="2003-04" db="EMBL/GenBank/DDBJ databases">
        <title>Full-length cDNA libraries and normalization.</title>
        <authorList>
            <person name="Li W.B."/>
            <person name="Gruber C."/>
            <person name="Jessee J."/>
            <person name="Polayes D."/>
        </authorList>
    </citation>
    <scope>NUCLEOTIDE SEQUENCE [LARGE SCALE MRNA] OF 1-304</scope>
    <source>
        <tissue>Placenta</tissue>
    </source>
</reference>
<reference key="7">
    <citation type="journal article" date="2001" name="Brain Res.">
        <title>Altered gene expression in cerebral capillaries of stroke-prone spontaneously hypertensive rats.</title>
        <authorList>
            <person name="Kirsch T."/>
            <person name="Wellner M."/>
            <person name="Luft F.C."/>
            <person name="Haller H."/>
            <person name="Lippoldt A."/>
        </authorList>
    </citation>
    <scope>IDENTIFICATION</scope>
</reference>
<reference key="8">
    <citation type="journal article" date="2005" name="Int. J. Gynecol. Obstet.">
        <title>Expression of endothelial nitric oxide synthase traffic inducer in the placentas of women with pre-eclampsia.</title>
        <authorList>
            <person name="Xiang W."/>
            <person name="Chen H."/>
            <person name="Xu X."/>
            <person name="Zhang M."/>
            <person name="Jiang R."/>
        </authorList>
    </citation>
    <scope>TISSUE SPECIFICITY</scope>
</reference>
<reference key="9">
    <citation type="journal article" date="2005" name="J. Cell Sci.">
        <title>NOSTRIN functions as a homotrimeric adaptor protein facilitating internalization of eNOS.</title>
        <authorList>
            <person name="Icking A."/>
            <person name="Matt S."/>
            <person name="Opitz N."/>
            <person name="Wiesenthal A."/>
            <person name="Mueller-Esterl W."/>
            <person name="Schilling K."/>
        </authorList>
    </citation>
    <scope>SUBUNIT</scope>
    <scope>INTERACTION WITH DNM2 AND WASL</scope>
    <scope>SUBCELLULAR LOCATION</scope>
    <scope>FUNCTION</scope>
</reference>
<reference key="10">
    <citation type="journal article" date="2006" name="FEBS Lett.">
        <title>FCH/Cdc15 domain determines distinct subcellular localization of NOSTRIN.</title>
        <authorList>
            <person name="Icking A."/>
            <person name="Schilling K."/>
            <person name="Wiesenthal A."/>
            <person name="Opitz N."/>
            <person name="Mueller-Esterl W."/>
        </authorList>
    </citation>
    <scope>SUBCELLULAR LOCATION</scope>
</reference>
<reference key="11">
    <citation type="journal article" date="2006" name="Mol. Biol. Cell">
        <title>Translocation of endothelial nitric-oxide synthase involves a ternary complex with caveolin-1 and NOSTRIN.</title>
        <authorList>
            <person name="Schilling K."/>
            <person name="Opitz N."/>
            <person name="Wiesenthal A."/>
            <person name="Oess S."/>
            <person name="Tikkanen R."/>
            <person name="Mueller-Esterl W."/>
            <person name="Icking A."/>
        </authorList>
    </citation>
    <scope>INTERACTION WITH CAV1</scope>
    <scope>FUNCTION</scope>
</reference>
<reference key="12">
    <citation type="journal article" date="2009" name="Traffic">
        <title>NOSTRINbeta--a shortened NOSTRIN variant with a role in transcriptional regulation.</title>
        <authorList>
            <person name="Wiesenthal A."/>
            <person name="Hoffmeister M."/>
            <person name="Siddique M."/>
            <person name="Kovacevic I."/>
            <person name="Oess S."/>
            <person name="Muller-Esterl W."/>
            <person name="Siehoff-Icking A."/>
        </authorList>
    </citation>
    <scope>SUBCELLULAR LOCATION (ISOFORM 3)</scope>
</reference>
<reference key="13">
    <citation type="journal article" date="2013" name="J. Proteome Res.">
        <title>Toward a comprehensive characterization of a human cancer cell phosphoproteome.</title>
        <authorList>
            <person name="Zhou H."/>
            <person name="Di Palma S."/>
            <person name="Preisinger C."/>
            <person name="Peng M."/>
            <person name="Polat A.N."/>
            <person name="Heck A.J."/>
            <person name="Mohammed S."/>
        </authorList>
    </citation>
    <scope>IDENTIFICATION BY MASS SPECTROMETRY [LARGE SCALE ANALYSIS]</scope>
    <source>
        <tissue>Erythroleukemia</tissue>
    </source>
</reference>
<reference key="14">
    <citation type="submission" date="2007-10" db="PDB data bank">
        <title>Solution structure of the SH3 domain of human nostrin.</title>
        <authorList>
            <consortium name="RIKEN structural genomics initiative (RSGI)"/>
        </authorList>
    </citation>
    <scope>STRUCTURE BY NMR OF 439-506</scope>
</reference>
<proteinExistence type="evidence at protein level"/>
<name>NOSTN_HUMAN</name>
<comment type="function">
    <text evidence="8 12 14">Multivalent adapter protein which may decrease NOS3 activity by inducing its translocation away from the plasma membrane.</text>
</comment>
<comment type="subunit">
    <text evidence="1 2 8 12 14">Homotrimer. Interacts with DAB2 (By similarity). Interacts with NOS3, DNM2, WASL and CAV1. Interacts (via SH3 domain) with DNM2; this interaction allows the recruitment of NOS3 to dynamin-positive structures (By similarity).</text>
</comment>
<comment type="interaction">
    <interactant intactId="EBI-1391643">
        <id>Q8IVI9</id>
    </interactant>
    <interactant intactId="EBI-713135">
        <id>Q05193</id>
        <label>DNM1</label>
    </interactant>
    <organismsDiffer>false</organismsDiffer>
    <experiments>3</experiments>
</comment>
<comment type="interaction">
    <interactant intactId="EBI-1391643">
        <id>Q8IVI9</id>
    </interactant>
    <interactant intactId="EBI-1028277">
        <id>P11362</id>
        <label>FGFR1</label>
    </interactant>
    <organismsDiffer>false</organismsDiffer>
    <experiments>5</experiments>
</comment>
<comment type="interaction">
    <interactant intactId="EBI-1391643">
        <id>Q8IVI9</id>
    </interactant>
    <interactant intactId="EBI-1391623">
        <id>P29474</id>
        <label>NOS3</label>
    </interactant>
    <organismsDiffer>false</organismsDiffer>
    <experiments>9</experiments>
</comment>
<comment type="interaction">
    <interactant intactId="EBI-1391643">
        <id>Q8IVI9</id>
    </interactant>
    <interactant intactId="EBI-6142604">
        <id>O08816</id>
        <label>Wasl</label>
    </interactant>
    <organismsDiffer>true</organismsDiffer>
    <experiments>3</experiments>
</comment>
<comment type="interaction">
    <interactant intactId="EBI-12280006">
        <id>Q8IVI9-3</id>
    </interactant>
    <interactant intactId="EBI-1045155">
        <id>P43360</id>
        <label>MAGEA6</label>
    </interactant>
    <organismsDiffer>false</organismsDiffer>
    <experiments>3</experiments>
</comment>
<comment type="subcellular location">
    <molecule>Isoform 1</molecule>
    <subcellularLocation>
        <location evidence="8 13">Cell membrane</location>
        <topology evidence="8 13">Peripheral membrane protein</topology>
        <orientation evidence="8 13">Cytoplasmic side</orientation>
    </subcellularLocation>
    <subcellularLocation>
        <location evidence="8">Cytoplasmic vesicle</location>
    </subcellularLocation>
    <subcellularLocation>
        <location evidence="12 13">Cytoplasm</location>
        <location evidence="12 13">Cytoskeleton</location>
    </subcellularLocation>
    <text>Enriched in selected actin structures (PubMed:16234328, PubMed:16376344).</text>
</comment>
<comment type="subcellular location">
    <molecule>Isoform 3</molecule>
    <subcellularLocation>
        <location evidence="15">Nucleus</location>
    </subcellularLocation>
</comment>
<comment type="alternative products">
    <event type="alternative splicing"/>
    <isoform>
        <id>Q8IVI9-1</id>
        <name>1</name>
        <name>NOSTRINalpha</name>
        <sequence type="displayed"/>
    </isoform>
    <isoform>
        <id>Q8IVI9-2</id>
        <name>2</name>
        <sequence type="described" ref="VSP_025885"/>
    </isoform>
    <isoform>
        <id>Q8IVI9-3</id>
        <name>3</name>
        <name>NOSTRINbeta</name>
        <sequence type="described" ref="VSP_025884"/>
    </isoform>
    <isoform>
        <id>Q8IVI9-4</id>
        <name>4</name>
        <sequence type="described" ref="VSP_044995"/>
    </isoform>
</comment>
<comment type="tissue specificity">
    <text evidence="8 11">Expressed at highest levels in heart, kidney, placenta and lung, and at lowest levels in brain, thymus and spleen. Present in vascular endothelial cells and placenta. Over-expressed in placenta from women with pre-eclampsia (at protein level).</text>
</comment>
<comment type="domain">
    <text>The SH3 domain mediates interaction with NOS3, DNM2 and WASL.</text>
</comment>
<comment type="domain">
    <text>The F-BAR domain is necessary for membrane targeting.</text>
</comment>
<comment type="miscellaneous">
    <molecule>Isoform 3</molecule>
    <text evidence="15">May negatively regulate transcription of the NOSTRIN gene.</text>
</comment>
<feature type="chain" id="PRO_0000289089" description="Nostrin">
    <location>
        <begin position="1"/>
        <end position="506"/>
    </location>
</feature>
<feature type="domain" description="F-BAR" evidence="6">
    <location>
        <begin position="1"/>
        <end position="260"/>
    </location>
</feature>
<feature type="domain" description="REM-1" evidence="7">
    <location>
        <begin position="292"/>
        <end position="372"/>
    </location>
</feature>
<feature type="domain" description="SH3" evidence="5">
    <location>
        <begin position="438"/>
        <end position="497"/>
    </location>
</feature>
<feature type="coiled-coil region" evidence="4">
    <location>
        <begin position="160"/>
        <end position="222"/>
    </location>
</feature>
<feature type="modified residue" description="Phosphoserine" evidence="2">
    <location>
        <position position="114"/>
    </location>
</feature>
<feature type="modified residue" description="Phosphoserine" evidence="3">
    <location>
        <position position="479"/>
    </location>
</feature>
<feature type="splice variant" id="VSP_025884" description="In isoform 3." evidence="18">
    <location>
        <begin position="1"/>
        <end position="78"/>
    </location>
</feature>
<feature type="splice variant" id="VSP_025885" description="In isoform 2." evidence="19">
    <location>
        <begin position="38"/>
        <end position="65"/>
    </location>
</feature>
<feature type="splice variant" id="VSP_044995" description="In isoform 4." evidence="17">
    <original>Y</original>
    <variation>YQVTHSICLYAFWVKRAWGKCVSDLRYQDTFLPGNLPPLWFGYDIVKRLIMRLCSVCL</variation>
    <location>
        <position position="209"/>
    </location>
</feature>
<feature type="sequence variant" id="VAR_032569" description="In dbSNP:rs479661." evidence="8 9 10 16">
    <original>G</original>
    <variation>E</variation>
    <location>
        <position position="473"/>
    </location>
</feature>
<feature type="sequence conflict" description="In Ref. 3; BAG52717." evidence="20" ref="3">
    <original>N</original>
    <variation>D</variation>
    <location>
        <position position="225"/>
    </location>
</feature>
<feature type="strand" evidence="22">
    <location>
        <begin position="441"/>
        <end position="447"/>
    </location>
</feature>
<feature type="strand" evidence="22">
    <location>
        <begin position="464"/>
        <end position="469"/>
    </location>
</feature>
<feature type="strand" evidence="22">
    <location>
        <begin position="472"/>
        <end position="474"/>
    </location>
</feature>
<feature type="strand" evidence="22">
    <location>
        <begin position="476"/>
        <end position="482"/>
    </location>
</feature>
<feature type="strand" evidence="22">
    <location>
        <begin position="484"/>
        <end position="487"/>
    </location>
</feature>
<feature type="strand" evidence="22">
    <location>
        <begin position="492"/>
        <end position="497"/>
    </location>
</feature>
<feature type="sequence conflict" description="In Ref. 3; BAG52717." evidence="20" ref="3">
    <original>T</original>
    <variation>I</variation>
    <location sequence="Q8IVI9-4">
        <position position="238"/>
    </location>
</feature>
<evidence type="ECO:0000250" key="1"/>
<evidence type="ECO:0000250" key="2">
    <source>
        <dbReference type="UniProtKB" id="Q5I0D6"/>
    </source>
</evidence>
<evidence type="ECO:0000250" key="3">
    <source>
        <dbReference type="UniProtKB" id="Q6WKZ7"/>
    </source>
</evidence>
<evidence type="ECO:0000255" key="4"/>
<evidence type="ECO:0000255" key="5">
    <source>
        <dbReference type="PROSITE-ProRule" id="PRU00192"/>
    </source>
</evidence>
<evidence type="ECO:0000255" key="6">
    <source>
        <dbReference type="PROSITE-ProRule" id="PRU01077"/>
    </source>
</evidence>
<evidence type="ECO:0000255" key="7">
    <source>
        <dbReference type="PROSITE-ProRule" id="PRU01207"/>
    </source>
</evidence>
<evidence type="ECO:0000269" key="8">
    <source>
    </source>
</evidence>
<evidence type="ECO:0000269" key="9">
    <source>
    </source>
</evidence>
<evidence type="ECO:0000269" key="10">
    <source>
    </source>
</evidence>
<evidence type="ECO:0000269" key="11">
    <source>
    </source>
</evidence>
<evidence type="ECO:0000269" key="12">
    <source>
    </source>
</evidence>
<evidence type="ECO:0000269" key="13">
    <source>
    </source>
</evidence>
<evidence type="ECO:0000269" key="14">
    <source>
    </source>
</evidence>
<evidence type="ECO:0000269" key="15">
    <source>
    </source>
</evidence>
<evidence type="ECO:0000269" key="16">
    <source ref="2"/>
</evidence>
<evidence type="ECO:0000303" key="17">
    <source>
    </source>
</evidence>
<evidence type="ECO:0000303" key="18">
    <source>
    </source>
</evidence>
<evidence type="ECO:0000303" key="19">
    <source ref="2"/>
</evidence>
<evidence type="ECO:0000305" key="20"/>
<evidence type="ECO:0000312" key="21">
    <source>
        <dbReference type="HGNC" id="HGNC:20203"/>
    </source>
</evidence>
<evidence type="ECO:0007829" key="22">
    <source>
        <dbReference type="PDB" id="2YUN"/>
    </source>
</evidence>
<keyword id="KW-0002">3D-structure</keyword>
<keyword id="KW-0025">Alternative splicing</keyword>
<keyword id="KW-1003">Cell membrane</keyword>
<keyword id="KW-0175">Coiled coil</keyword>
<keyword id="KW-0963">Cytoplasm</keyword>
<keyword id="KW-0968">Cytoplasmic vesicle</keyword>
<keyword id="KW-0206">Cytoskeleton</keyword>
<keyword id="KW-0254">Endocytosis</keyword>
<keyword id="KW-0472">Membrane</keyword>
<keyword id="KW-0539">Nucleus</keyword>
<keyword id="KW-0597">Phosphoprotein</keyword>
<keyword id="KW-1267">Proteomics identification</keyword>
<keyword id="KW-1185">Reference proteome</keyword>
<keyword id="KW-0728">SH3 domain</keyword>